<keyword id="KW-0066">ATP synthesis</keyword>
<keyword id="KW-1003">Cell membrane</keyword>
<keyword id="KW-0139">CF(1)</keyword>
<keyword id="KW-0375">Hydrogen ion transport</keyword>
<keyword id="KW-0406">Ion transport</keyword>
<keyword id="KW-0472">Membrane</keyword>
<keyword id="KW-1185">Reference proteome</keyword>
<keyword id="KW-0813">Transport</keyword>
<proteinExistence type="inferred from homology"/>
<reference key="1">
    <citation type="journal article" date="2005" name="J. Bacteriol.">
        <title>Swine and poultry pathogens: the complete genome sequences of two strains of Mycoplasma hyopneumoniae and a strain of Mycoplasma synoviae.</title>
        <authorList>
            <person name="Vasconcelos A.T.R."/>
            <person name="Ferreira H.B."/>
            <person name="Bizarro C.V."/>
            <person name="Bonatto S.L."/>
            <person name="Carvalho M.O."/>
            <person name="Pinto P.M."/>
            <person name="Almeida D.F."/>
            <person name="Almeida L.G.P."/>
            <person name="Almeida R."/>
            <person name="Alves-Junior L."/>
            <person name="Assuncao E.N."/>
            <person name="Azevedo V.A.C."/>
            <person name="Bogo M.R."/>
            <person name="Brigido M.M."/>
            <person name="Brocchi M."/>
            <person name="Burity H.A."/>
            <person name="Camargo A.A."/>
            <person name="Camargo S.S."/>
            <person name="Carepo M.S."/>
            <person name="Carraro D.M."/>
            <person name="de Mattos Cascardo J.C."/>
            <person name="Castro L.A."/>
            <person name="Cavalcanti G."/>
            <person name="Chemale G."/>
            <person name="Collevatti R.G."/>
            <person name="Cunha C.W."/>
            <person name="Dallagiovanna B."/>
            <person name="Dambros B.P."/>
            <person name="Dellagostin O.A."/>
            <person name="Falcao C."/>
            <person name="Fantinatti-Garboggini F."/>
            <person name="Felipe M.S.S."/>
            <person name="Fiorentin L."/>
            <person name="Franco G.R."/>
            <person name="Freitas N.S.A."/>
            <person name="Frias D."/>
            <person name="Grangeiro T.B."/>
            <person name="Grisard E.C."/>
            <person name="Guimaraes C.T."/>
            <person name="Hungria M."/>
            <person name="Jardim S.N."/>
            <person name="Krieger M.A."/>
            <person name="Laurino J.P."/>
            <person name="Lima L.F.A."/>
            <person name="Lopes M.I."/>
            <person name="Loreto E.L.S."/>
            <person name="Madeira H.M.F."/>
            <person name="Manfio G.P."/>
            <person name="Maranhao A.Q."/>
            <person name="Martinkovics C.T."/>
            <person name="Medeiros S.R.B."/>
            <person name="Moreira M.A.M."/>
            <person name="Neiva M."/>
            <person name="Ramalho-Neto C.E."/>
            <person name="Nicolas M.F."/>
            <person name="Oliveira S.C."/>
            <person name="Paixao R.F.C."/>
            <person name="Pedrosa F.O."/>
            <person name="Pena S.D.J."/>
            <person name="Pereira M."/>
            <person name="Pereira-Ferrari L."/>
            <person name="Piffer I."/>
            <person name="Pinto L.S."/>
            <person name="Potrich D.P."/>
            <person name="Salim A.C.M."/>
            <person name="Santos F.R."/>
            <person name="Schmitt R."/>
            <person name="Schneider M.P.C."/>
            <person name="Schrank A."/>
            <person name="Schrank I.S."/>
            <person name="Schuck A.F."/>
            <person name="Seuanez H.N."/>
            <person name="Silva D.W."/>
            <person name="Silva R."/>
            <person name="Silva S.C."/>
            <person name="Soares C.M.A."/>
            <person name="Souza K.R.L."/>
            <person name="Souza R.C."/>
            <person name="Staats C.C."/>
            <person name="Steffens M.B.R."/>
            <person name="Teixeira S.M.R."/>
            <person name="Urmenyi T.P."/>
            <person name="Vainstein M.H."/>
            <person name="Zuccherato L.W."/>
            <person name="Simpson A.J.G."/>
            <person name="Zaha A."/>
        </authorList>
    </citation>
    <scope>NUCLEOTIDE SEQUENCE [LARGE SCALE GENOMIC DNA]</scope>
    <source>
        <strain>53</strain>
    </source>
</reference>
<organism>
    <name type="scientific">Mycoplasmopsis synoviae (strain 53)</name>
    <name type="common">Mycoplasma synoviae</name>
    <dbReference type="NCBI Taxonomy" id="262723"/>
    <lineage>
        <taxon>Bacteria</taxon>
        <taxon>Bacillati</taxon>
        <taxon>Mycoplasmatota</taxon>
        <taxon>Mycoplasmoidales</taxon>
        <taxon>Metamycoplasmataceae</taxon>
        <taxon>Mycoplasmopsis</taxon>
    </lineage>
</organism>
<name>ATPE_MYCS5</name>
<accession>Q4A605</accession>
<sequence length="137" mass="15689">MAKLKLTITTPSAIFYDDLVDIVTLRVNLGYKGFLPNASEFFSNIEPGTLTINYENSSDMIKCHIGSGLIYSNKESVNIITDDIVKIEDINLDALNKQKEMLENRLKENLRESLLKQVEEKLENINSRIKAYNEFKK</sequence>
<comment type="function">
    <text evidence="1">Produces ATP from ADP in the presence of a proton gradient across the membrane.</text>
</comment>
<comment type="subunit">
    <text>F-type ATPases have 2 components, CF(1) - the catalytic core - and CF(0) - the membrane proton channel. CF(1) has five subunits: alpha(3), beta(3), gamma(1), delta(1), epsilon(1). CF(0) has three main subunits: a, b and c.</text>
</comment>
<comment type="subcellular location">
    <subcellularLocation>
        <location evidence="1">Cell membrane</location>
        <topology evidence="1">Peripheral membrane protein</topology>
    </subcellularLocation>
</comment>
<comment type="similarity">
    <text evidence="1">Belongs to the ATPase epsilon chain family.</text>
</comment>
<dbReference type="EMBL" id="AE017245">
    <property type="protein sequence ID" value="AAZ43816.1"/>
    <property type="molecule type" value="Genomic_DNA"/>
</dbReference>
<dbReference type="RefSeq" id="WP_011283547.1">
    <property type="nucleotide sequence ID" value="NC_007294.1"/>
</dbReference>
<dbReference type="SMR" id="Q4A605"/>
<dbReference type="STRING" id="262723.MS53_0404"/>
<dbReference type="KEGG" id="msy:MS53_0404"/>
<dbReference type="HOGENOM" id="CLU_084338_1_3_14"/>
<dbReference type="OrthoDB" id="389606at2"/>
<dbReference type="Proteomes" id="UP000000549">
    <property type="component" value="Chromosome"/>
</dbReference>
<dbReference type="GO" id="GO:0005886">
    <property type="term" value="C:plasma membrane"/>
    <property type="evidence" value="ECO:0007669"/>
    <property type="project" value="UniProtKB-SubCell"/>
</dbReference>
<dbReference type="GO" id="GO:0045259">
    <property type="term" value="C:proton-transporting ATP synthase complex"/>
    <property type="evidence" value="ECO:0007669"/>
    <property type="project" value="UniProtKB-KW"/>
</dbReference>
<dbReference type="GO" id="GO:0005524">
    <property type="term" value="F:ATP binding"/>
    <property type="evidence" value="ECO:0007669"/>
    <property type="project" value="UniProtKB-UniRule"/>
</dbReference>
<dbReference type="GO" id="GO:0046933">
    <property type="term" value="F:proton-transporting ATP synthase activity, rotational mechanism"/>
    <property type="evidence" value="ECO:0007669"/>
    <property type="project" value="UniProtKB-UniRule"/>
</dbReference>
<dbReference type="Gene3D" id="2.60.15.10">
    <property type="entry name" value="F0F1 ATP synthase delta/epsilon subunit, N-terminal"/>
    <property type="match status" value="1"/>
</dbReference>
<dbReference type="HAMAP" id="MF_00530">
    <property type="entry name" value="ATP_synth_epsil_bac"/>
    <property type="match status" value="1"/>
</dbReference>
<dbReference type="InterPro" id="IPR001469">
    <property type="entry name" value="ATP_synth_F1_dsu/esu"/>
</dbReference>
<dbReference type="InterPro" id="IPR020546">
    <property type="entry name" value="ATP_synth_F1_dsu/esu_N"/>
</dbReference>
<dbReference type="InterPro" id="IPR036771">
    <property type="entry name" value="ATPsynth_dsu/esu_N"/>
</dbReference>
<dbReference type="PANTHER" id="PTHR13822">
    <property type="entry name" value="ATP SYNTHASE DELTA/EPSILON CHAIN"/>
    <property type="match status" value="1"/>
</dbReference>
<dbReference type="PANTHER" id="PTHR13822:SF10">
    <property type="entry name" value="ATP SYNTHASE EPSILON CHAIN, CHLOROPLASTIC"/>
    <property type="match status" value="1"/>
</dbReference>
<dbReference type="Pfam" id="PF02823">
    <property type="entry name" value="ATP-synt_DE_N"/>
    <property type="match status" value="1"/>
</dbReference>
<dbReference type="SUPFAM" id="SSF51344">
    <property type="entry name" value="Epsilon subunit of F1F0-ATP synthase N-terminal domain"/>
    <property type="match status" value="1"/>
</dbReference>
<evidence type="ECO:0000255" key="1">
    <source>
        <dbReference type="HAMAP-Rule" id="MF_00530"/>
    </source>
</evidence>
<protein>
    <recommendedName>
        <fullName evidence="1">ATP synthase epsilon chain</fullName>
    </recommendedName>
    <alternativeName>
        <fullName evidence="1">ATP synthase F1 sector epsilon subunit</fullName>
    </alternativeName>
    <alternativeName>
        <fullName evidence="1">F-ATPase epsilon subunit</fullName>
    </alternativeName>
</protein>
<feature type="chain" id="PRO_0000265842" description="ATP synthase epsilon chain">
    <location>
        <begin position="1"/>
        <end position="137"/>
    </location>
</feature>
<gene>
    <name evidence="1" type="primary">atpC</name>
    <name type="ordered locus">MS53_0404</name>
</gene>